<organism>
    <name type="scientific">Cryptococcus neoformans var. neoformans serotype D (strain B-3501A)</name>
    <name type="common">Filobasidiella neoformans</name>
    <dbReference type="NCBI Taxonomy" id="283643"/>
    <lineage>
        <taxon>Eukaryota</taxon>
        <taxon>Fungi</taxon>
        <taxon>Dikarya</taxon>
        <taxon>Basidiomycota</taxon>
        <taxon>Agaricomycotina</taxon>
        <taxon>Tremellomycetes</taxon>
        <taxon>Tremellales</taxon>
        <taxon>Cryptococcaceae</taxon>
        <taxon>Cryptococcus</taxon>
        <taxon>Cryptococcus neoformans species complex</taxon>
    </lineage>
</organism>
<dbReference type="EMBL" id="AAEY01000016">
    <property type="protein sequence ID" value="EAL21719.1"/>
    <property type="molecule type" value="Genomic_DNA"/>
</dbReference>
<dbReference type="RefSeq" id="XP_776366.1">
    <property type="nucleotide sequence ID" value="XM_771273.1"/>
</dbReference>
<dbReference type="SMR" id="P0CS47"/>
<dbReference type="GeneID" id="4935249"/>
<dbReference type="KEGG" id="cnb:CNBC5830"/>
<dbReference type="VEuPathDB" id="FungiDB:CNBC5830"/>
<dbReference type="HOGENOM" id="CLU_000288_77_4_1"/>
<dbReference type="OrthoDB" id="8597at5206"/>
<dbReference type="GO" id="GO:0005847">
    <property type="term" value="C:mRNA cleavage and polyadenylation specificity factor complex"/>
    <property type="evidence" value="ECO:0007669"/>
    <property type="project" value="TreeGrafter"/>
</dbReference>
<dbReference type="GO" id="GO:0007059">
    <property type="term" value="P:chromosome segregation"/>
    <property type="evidence" value="ECO:0007669"/>
    <property type="project" value="UniProtKB-KW"/>
</dbReference>
<dbReference type="GO" id="GO:0031124">
    <property type="term" value="P:mRNA 3'-end processing"/>
    <property type="evidence" value="ECO:0007669"/>
    <property type="project" value="InterPro"/>
</dbReference>
<dbReference type="CDD" id="cd00200">
    <property type="entry name" value="WD40"/>
    <property type="match status" value="1"/>
</dbReference>
<dbReference type="FunFam" id="2.130.10.10:FF:002100">
    <property type="entry name" value="Unplaced genomic scaffold supercont1.23, whole genome shotgun sequence"/>
    <property type="match status" value="1"/>
</dbReference>
<dbReference type="FunFam" id="2.130.10.10:FF:000069">
    <property type="entry name" value="WD repeat domain 33"/>
    <property type="match status" value="1"/>
</dbReference>
<dbReference type="Gene3D" id="2.130.10.10">
    <property type="entry name" value="YVTN repeat-like/Quinoprotein amine dehydrogenase"/>
    <property type="match status" value="2"/>
</dbReference>
<dbReference type="InterPro" id="IPR045245">
    <property type="entry name" value="Pfs2-like"/>
</dbReference>
<dbReference type="InterPro" id="IPR015943">
    <property type="entry name" value="WD40/YVTN_repeat-like_dom_sf"/>
</dbReference>
<dbReference type="InterPro" id="IPR036322">
    <property type="entry name" value="WD40_repeat_dom_sf"/>
</dbReference>
<dbReference type="InterPro" id="IPR001680">
    <property type="entry name" value="WD40_rpt"/>
</dbReference>
<dbReference type="PANTHER" id="PTHR22836:SF0">
    <property type="entry name" value="PRE-MRNA 3' END PROCESSING PROTEIN WDR33"/>
    <property type="match status" value="1"/>
</dbReference>
<dbReference type="PANTHER" id="PTHR22836">
    <property type="entry name" value="WD40 REPEAT PROTEIN"/>
    <property type="match status" value="1"/>
</dbReference>
<dbReference type="Pfam" id="PF00400">
    <property type="entry name" value="WD40"/>
    <property type="match status" value="6"/>
</dbReference>
<dbReference type="SMART" id="SM00320">
    <property type="entry name" value="WD40"/>
    <property type="match status" value="7"/>
</dbReference>
<dbReference type="SUPFAM" id="SSF50978">
    <property type="entry name" value="WD40 repeat-like"/>
    <property type="match status" value="1"/>
</dbReference>
<dbReference type="PROSITE" id="PS50082">
    <property type="entry name" value="WD_REPEATS_2"/>
    <property type="match status" value="4"/>
</dbReference>
<dbReference type="PROSITE" id="PS50294">
    <property type="entry name" value="WD_REPEATS_REGION"/>
    <property type="match status" value="1"/>
</dbReference>
<protein>
    <recommendedName>
        <fullName>Polyadenylation factor subunit 2</fullName>
    </recommendedName>
</protein>
<name>PFS2_CRYNB</name>
<comment type="function">
    <text evidence="1">Required for 3'-end cleavage and polyadenylation of pre-mRNAs. Also involved in chromosome segregation where it has a role in chromosome attachment to the mitotic spindle (By similarity).</text>
</comment>
<comment type="subcellular location">
    <subcellularLocation>
        <location evidence="1">Nucleus</location>
    </subcellularLocation>
</comment>
<keyword id="KW-0159">Chromosome partition</keyword>
<keyword id="KW-0507">mRNA processing</keyword>
<keyword id="KW-0539">Nucleus</keyword>
<keyword id="KW-0677">Repeat</keyword>
<keyword id="KW-0853">WD repeat</keyword>
<reference key="1">
    <citation type="journal article" date="2005" name="Science">
        <title>The genome of the basidiomycetous yeast and human pathogen Cryptococcus neoformans.</title>
        <authorList>
            <person name="Loftus B.J."/>
            <person name="Fung E."/>
            <person name="Roncaglia P."/>
            <person name="Rowley D."/>
            <person name="Amedeo P."/>
            <person name="Bruno D."/>
            <person name="Vamathevan J."/>
            <person name="Miranda M."/>
            <person name="Anderson I.J."/>
            <person name="Fraser J.A."/>
            <person name="Allen J.E."/>
            <person name="Bosdet I.E."/>
            <person name="Brent M.R."/>
            <person name="Chiu R."/>
            <person name="Doering T.L."/>
            <person name="Donlin M.J."/>
            <person name="D'Souza C.A."/>
            <person name="Fox D.S."/>
            <person name="Grinberg V."/>
            <person name="Fu J."/>
            <person name="Fukushima M."/>
            <person name="Haas B.J."/>
            <person name="Huang J.C."/>
            <person name="Janbon G."/>
            <person name="Jones S.J.M."/>
            <person name="Koo H.L."/>
            <person name="Krzywinski M.I."/>
            <person name="Kwon-Chung K.J."/>
            <person name="Lengeler K.B."/>
            <person name="Maiti R."/>
            <person name="Marra M.A."/>
            <person name="Marra R.E."/>
            <person name="Mathewson C.A."/>
            <person name="Mitchell T.G."/>
            <person name="Pertea M."/>
            <person name="Riggs F.R."/>
            <person name="Salzberg S.L."/>
            <person name="Schein J.E."/>
            <person name="Shvartsbeyn A."/>
            <person name="Shin H."/>
            <person name="Shumway M."/>
            <person name="Specht C.A."/>
            <person name="Suh B.B."/>
            <person name="Tenney A."/>
            <person name="Utterback T.R."/>
            <person name="Wickes B.L."/>
            <person name="Wortman J.R."/>
            <person name="Wye N.H."/>
            <person name="Kronstad J.W."/>
            <person name="Lodge J.K."/>
            <person name="Heitman J."/>
            <person name="Davis R.W."/>
            <person name="Fraser C.M."/>
            <person name="Hyman R.W."/>
        </authorList>
    </citation>
    <scope>NUCLEOTIDE SEQUENCE [LARGE SCALE GENOMIC DNA]</scope>
    <source>
        <strain>B-3501A</strain>
    </source>
</reference>
<feature type="chain" id="PRO_0000410336" description="Polyadenylation factor subunit 2">
    <location>
        <begin position="1"/>
        <end position="713"/>
    </location>
</feature>
<feature type="repeat" description="WD 1">
    <location>
        <begin position="131"/>
        <end position="170"/>
    </location>
</feature>
<feature type="repeat" description="WD 2">
    <location>
        <begin position="173"/>
        <end position="213"/>
    </location>
</feature>
<feature type="repeat" description="WD 3">
    <location>
        <begin position="214"/>
        <end position="253"/>
    </location>
</feature>
<feature type="repeat" description="WD 4">
    <location>
        <begin position="256"/>
        <end position="295"/>
    </location>
</feature>
<feature type="repeat" description="WD 5">
    <location>
        <begin position="298"/>
        <end position="337"/>
    </location>
</feature>
<feature type="repeat" description="WD 6">
    <location>
        <begin position="340"/>
        <end position="380"/>
    </location>
</feature>
<feature type="repeat" description="WD 7">
    <location>
        <begin position="387"/>
        <end position="426"/>
    </location>
</feature>
<feature type="region of interest" description="Disordered" evidence="2">
    <location>
        <begin position="1"/>
        <end position="37"/>
    </location>
</feature>
<feature type="region of interest" description="Disordered" evidence="2">
    <location>
        <begin position="448"/>
        <end position="474"/>
    </location>
</feature>
<feature type="region of interest" description="Disordered" evidence="2">
    <location>
        <begin position="490"/>
        <end position="713"/>
    </location>
</feature>
<feature type="compositionally biased region" description="Gly residues" evidence="2">
    <location>
        <begin position="460"/>
        <end position="470"/>
    </location>
</feature>
<feature type="compositionally biased region" description="Low complexity" evidence="2">
    <location>
        <begin position="534"/>
        <end position="548"/>
    </location>
</feature>
<feature type="compositionally biased region" description="Basic and acidic residues" evidence="2">
    <location>
        <begin position="566"/>
        <end position="593"/>
    </location>
</feature>
<feature type="compositionally biased region" description="Pro residues" evidence="2">
    <location>
        <begin position="604"/>
        <end position="613"/>
    </location>
</feature>
<feature type="compositionally biased region" description="Pro residues" evidence="2">
    <location>
        <begin position="620"/>
        <end position="672"/>
    </location>
</feature>
<feature type="compositionally biased region" description="Gly residues" evidence="2">
    <location>
        <begin position="679"/>
        <end position="713"/>
    </location>
</feature>
<accession>P0CS47</accession>
<accession>Q55VA1</accession>
<accession>Q5KKY3</accession>
<sequence>MTAPTVPADQHGHPLPGPADPAANDTWRPSRYREPLHPDNEEVLEQAAYQAAVTRSSGDDRKRKIKPRRTVDYQGGVQKWRMLNKLKGVHEFRPAIHPNPSDIVNFLPPVALRSNPSTSICDYWVHTSINKERSPTRVVRWTPDARRLLTGNDKGQFTLWNGASFNYESITQVHDDSIRSFTYSHNGQALVSADKGGTIKYFTPHLTNIHGFQGHREACHDVSWSPNDERFVTCGDDGLVKIWSYREAKEERSLSGHGWDVRCVDWHPTKGLIVSGSKDMLVKFWDPRTGKDLSTLHSSKSTINTCRWSPDGHLVATAGQDSVIRLFDIRTFRELEVLKGHEKEVNCIEWHPIHHSLLVSGDALGTINYFSLLSPTPSTPITTLSAAHEDAVFSLSFHPLGHILCSGSKDFTARFWCRARPPGGQEFDKWHLTEEGAAQKELERITKREWGTNALPANAAGGGGGGGGGDKQQVALPGLSNLVAAVNSVKTGPTTTGGGPPGLPGLGAPNVHAGTPPSRVSTPSSMGPPGAGAQGQAQGGQFPRGRAALPSQNDMLRHNHGPRGGFADRDRNGGGDRGGMDRDRDSRGGRQDPRGNQMYGRGPGGPPPGPPPGQGGYNYPPAPPNYPPYPPSSYPPPPNNQPGYPPAPNYAMPPGPGAPPQSYPYNRPPQGPPQNNNPGGQGNYGASASGGYGQYGGGGGGGGGGGYGRDGRR</sequence>
<proteinExistence type="inferred from homology"/>
<gene>
    <name type="primary">PFS2</name>
    <name type="ordered locus">CNBC5830</name>
</gene>
<evidence type="ECO:0000250" key="1"/>
<evidence type="ECO:0000256" key="2">
    <source>
        <dbReference type="SAM" id="MobiDB-lite"/>
    </source>
</evidence>